<organism>
    <name type="scientific">Aspergillus terreus (strain NIH 2624 / FGSC A1156)</name>
    <dbReference type="NCBI Taxonomy" id="341663"/>
    <lineage>
        <taxon>Eukaryota</taxon>
        <taxon>Fungi</taxon>
        <taxon>Dikarya</taxon>
        <taxon>Ascomycota</taxon>
        <taxon>Pezizomycotina</taxon>
        <taxon>Eurotiomycetes</taxon>
        <taxon>Eurotiomycetidae</taxon>
        <taxon>Eurotiales</taxon>
        <taxon>Aspergillaceae</taxon>
        <taxon>Aspergillus</taxon>
        <taxon>Aspergillus subgen. Circumdati</taxon>
    </lineage>
</organism>
<dbReference type="EMBL" id="CH476598">
    <property type="protein sequence ID" value="EAU35990.1"/>
    <property type="molecule type" value="Genomic_DNA"/>
</dbReference>
<dbReference type="RefSeq" id="XP_001213366.1">
    <property type="nucleotide sequence ID" value="XM_001213366.1"/>
</dbReference>
<dbReference type="SMR" id="Q0CQ46"/>
<dbReference type="STRING" id="341663.Q0CQ46"/>
<dbReference type="EnsemblFungi" id="EAU35990">
    <property type="protein sequence ID" value="EAU35990"/>
    <property type="gene ID" value="ATEG_04188"/>
</dbReference>
<dbReference type="GeneID" id="4318563"/>
<dbReference type="VEuPathDB" id="FungiDB:ATEG_04188"/>
<dbReference type="eggNOG" id="KOG3830">
    <property type="taxonomic scope" value="Eukaryota"/>
</dbReference>
<dbReference type="HOGENOM" id="CLU_014314_1_0_1"/>
<dbReference type="OMA" id="RTDYVWK"/>
<dbReference type="OrthoDB" id="18648at2759"/>
<dbReference type="Proteomes" id="UP000007963">
    <property type="component" value="Unassembled WGS sequence"/>
</dbReference>
<dbReference type="GO" id="GO:1990130">
    <property type="term" value="C:GATOR1 complex"/>
    <property type="evidence" value="ECO:0007669"/>
    <property type="project" value="TreeGrafter"/>
</dbReference>
<dbReference type="GO" id="GO:0034198">
    <property type="term" value="P:cellular response to amino acid starvation"/>
    <property type="evidence" value="ECO:0007669"/>
    <property type="project" value="TreeGrafter"/>
</dbReference>
<dbReference type="GO" id="GO:0051321">
    <property type="term" value="P:meiotic cell cycle"/>
    <property type="evidence" value="ECO:0007669"/>
    <property type="project" value="UniProtKB-KW"/>
</dbReference>
<dbReference type="GO" id="GO:1904262">
    <property type="term" value="P:negative regulation of TORC1 signaling"/>
    <property type="evidence" value="ECO:0007669"/>
    <property type="project" value="TreeGrafter"/>
</dbReference>
<dbReference type="GO" id="GO:0010508">
    <property type="term" value="P:positive regulation of autophagy"/>
    <property type="evidence" value="ECO:0007669"/>
    <property type="project" value="TreeGrafter"/>
</dbReference>
<dbReference type="GO" id="GO:0038202">
    <property type="term" value="P:TORC1 signaling"/>
    <property type="evidence" value="ECO:0007669"/>
    <property type="project" value="TreeGrafter"/>
</dbReference>
<dbReference type="InterPro" id="IPR056603">
    <property type="entry name" value="HTH_NPRL3"/>
</dbReference>
<dbReference type="InterPro" id="IPR005365">
    <property type="entry name" value="Npr3"/>
</dbReference>
<dbReference type="PANTHER" id="PTHR13153">
    <property type="entry name" value="CGTHBA PROTEIN -14 GENE PROTEIN"/>
    <property type="match status" value="1"/>
</dbReference>
<dbReference type="PANTHER" id="PTHR13153:SF5">
    <property type="entry name" value="GATOR COMPLEX PROTEIN NPRL3"/>
    <property type="match status" value="1"/>
</dbReference>
<dbReference type="Pfam" id="PF24064">
    <property type="entry name" value="HTH_NPRL3"/>
    <property type="match status" value="1"/>
</dbReference>
<dbReference type="Pfam" id="PF03666">
    <property type="entry name" value="NPR3"/>
    <property type="match status" value="1"/>
</dbReference>
<feature type="signal peptide" evidence="2">
    <location>
        <begin position="1"/>
        <end position="23"/>
    </location>
</feature>
<feature type="chain" id="PRO_0000301795" description="Nitrogen permease regulator 3">
    <location>
        <begin position="24"/>
        <end position="818"/>
    </location>
</feature>
<feature type="region of interest" description="Disordered" evidence="3">
    <location>
        <begin position="31"/>
        <end position="97"/>
    </location>
</feature>
<feature type="region of interest" description="Disordered" evidence="3">
    <location>
        <begin position="118"/>
        <end position="188"/>
    </location>
</feature>
<feature type="region of interest" description="Disordered" evidence="3">
    <location>
        <begin position="219"/>
        <end position="293"/>
    </location>
</feature>
<feature type="region of interest" description="Disordered" evidence="3">
    <location>
        <begin position="640"/>
        <end position="685"/>
    </location>
</feature>
<feature type="compositionally biased region" description="Basic residues" evidence="3">
    <location>
        <begin position="43"/>
        <end position="55"/>
    </location>
</feature>
<feature type="compositionally biased region" description="Low complexity" evidence="3">
    <location>
        <begin position="56"/>
        <end position="67"/>
    </location>
</feature>
<feature type="compositionally biased region" description="Low complexity" evidence="3">
    <location>
        <begin position="82"/>
        <end position="93"/>
    </location>
</feature>
<feature type="compositionally biased region" description="Basic and acidic residues" evidence="3">
    <location>
        <begin position="230"/>
        <end position="245"/>
    </location>
</feature>
<feature type="compositionally biased region" description="Polar residues" evidence="3">
    <location>
        <begin position="260"/>
        <end position="284"/>
    </location>
</feature>
<feature type="compositionally biased region" description="Low complexity" evidence="3">
    <location>
        <begin position="663"/>
        <end position="674"/>
    </location>
</feature>
<sequence length="818" mass="89700">MSSIARPPDPCLVAIILIVRSRAGPRFVFHYPPNPLSDNGLKSAKKARRASRTKSTRSSDSSSSDDSGPTSDEDEEEHQRLQQQQQQQQAQQQSSHIAGQPLSVTHLAGSAVSRRSSNFGLDDHVGMAASPGGESARAGSIGSGRTLLRKRGGNSDVEDDAGTSSDRQDDAGSSAMGGGRKGGPPPWESLLGLPAKVWEKLLSPSRAWHKRRFEVGINDLGRKKKKKPRAERQGGELGHNEHTDDAREEADAGEELMVASTETLSPHQMSASESQRASIASSKTGRAPSESLDVDDKDRMTMFNVVFVLDPPLLEYSMRSREIYDNIIKKFAKALKWEQARTGYVWREAQHISHIKEKAKEKGTSVNALYTELINQSSLARAIYTVYTSIAASKIASVSLSPDVSISLQIPPLTSTPYLPGPTDEAYPGLWLTTADSVTPVDDPTANESTAPHQVLAKHFALLLLDSEATILKDVEASGGALAPALAHYIRCSKPTKSFAQISASSGIPLPTIQMLASHLVYWRRARAIPPLHQRDTYIVSPNCDLSKLDVATAAYQLAFPTLPSLPKMLSALSGTPRPYGSFIPSKDHKDAYFAILAWLLRGGWVTQLRSFSRVKVTPEIKMAVEVALRREEVDKYLSKRGNVSSDAGNRGDSSEHDDDDASSSSSSSLASQDSGEETPMPGRYKQDSELQLTRSLLDRNTSLKTSSLILFPHRASPLESRWMDEIVSRFPDNPRPARPGTEGDPEQAGLQTSLKQFWPTYIKYFNGYDALEKISVRENLKRKHVWQVLTRLGLVTGSQASLDLDPREQVLVSVRHW</sequence>
<accession>Q0CQ46</accession>
<evidence type="ECO:0000250" key="1"/>
<evidence type="ECO:0000255" key="2"/>
<evidence type="ECO:0000256" key="3">
    <source>
        <dbReference type="SAM" id="MobiDB-lite"/>
    </source>
</evidence>
<evidence type="ECO:0000305" key="4"/>
<keyword id="KW-0469">Meiosis</keyword>
<keyword id="KW-1185">Reference proteome</keyword>
<keyword id="KW-0732">Signal</keyword>
<protein>
    <recommendedName>
        <fullName>Nitrogen permease regulator 3</fullName>
    </recommendedName>
    <alternativeName>
        <fullName>Required for meiotic nuclear division protein 11</fullName>
    </alternativeName>
</protein>
<name>NPR3_ASPTN</name>
<gene>
    <name type="primary">npr3</name>
    <name type="synonym">rmd11</name>
    <name type="ORF">ATEG_04188</name>
</gene>
<proteinExistence type="inferred from homology"/>
<comment type="function">
    <text evidence="1">Mediates inactivation of the TORC1 complex in response to amino acid starvation. Required for meiotic nuclear division (By similarity).</text>
</comment>
<comment type="similarity">
    <text evidence="4">Belongs to the NPR3 family.</text>
</comment>
<reference key="1">
    <citation type="submission" date="2005-09" db="EMBL/GenBank/DDBJ databases">
        <title>Annotation of the Aspergillus terreus NIH2624 genome.</title>
        <authorList>
            <person name="Birren B.W."/>
            <person name="Lander E.S."/>
            <person name="Galagan J.E."/>
            <person name="Nusbaum C."/>
            <person name="Devon K."/>
            <person name="Henn M."/>
            <person name="Ma L.-J."/>
            <person name="Jaffe D.B."/>
            <person name="Butler J."/>
            <person name="Alvarez P."/>
            <person name="Gnerre S."/>
            <person name="Grabherr M."/>
            <person name="Kleber M."/>
            <person name="Mauceli E.W."/>
            <person name="Brockman W."/>
            <person name="Rounsley S."/>
            <person name="Young S.K."/>
            <person name="LaButti K."/>
            <person name="Pushparaj V."/>
            <person name="DeCaprio D."/>
            <person name="Crawford M."/>
            <person name="Koehrsen M."/>
            <person name="Engels R."/>
            <person name="Montgomery P."/>
            <person name="Pearson M."/>
            <person name="Howarth C."/>
            <person name="Larson L."/>
            <person name="Luoma S."/>
            <person name="White J."/>
            <person name="Alvarado L."/>
            <person name="Kodira C.D."/>
            <person name="Zeng Q."/>
            <person name="Oleary S."/>
            <person name="Yandava C."/>
            <person name="Denning D.W."/>
            <person name="Nierman W.C."/>
            <person name="Milne T."/>
            <person name="Madden K."/>
        </authorList>
    </citation>
    <scope>NUCLEOTIDE SEQUENCE [LARGE SCALE GENOMIC DNA]</scope>
    <source>
        <strain>NIH 2624 / FGSC A1156</strain>
    </source>
</reference>